<protein>
    <recommendedName>
        <fullName evidence="1">ATP synthase subunit delta</fullName>
    </recommendedName>
    <alternativeName>
        <fullName evidence="1">ATP synthase F(1) sector subunit delta</fullName>
    </alternativeName>
    <alternativeName>
        <fullName evidence="1">F-type ATPase subunit delta</fullName>
        <shortName evidence="1">F-ATPase subunit delta</shortName>
    </alternativeName>
</protein>
<comment type="function">
    <text evidence="1">F(1)F(0) ATP synthase produces ATP from ADP in the presence of a proton or sodium gradient. F-type ATPases consist of two structural domains, F(1) containing the extramembraneous catalytic core and F(0) containing the membrane proton channel, linked together by a central stalk and a peripheral stalk. During catalysis, ATP synthesis in the catalytic domain of F(1) is coupled via a rotary mechanism of the central stalk subunits to proton translocation.</text>
</comment>
<comment type="function">
    <text evidence="1">This protein is part of the stalk that links CF(0) to CF(1). It either transmits conformational changes from CF(0) to CF(1) or is implicated in proton conduction.</text>
</comment>
<comment type="subunit">
    <text evidence="1">F-type ATPases have 2 components, F(1) - the catalytic core - and F(0) - the membrane proton channel. F(1) has five subunits: alpha(3), beta(3), gamma(1), delta(1), epsilon(1). F(0) has three main subunits: a(1), b(2) and c(10-14). The alpha and beta chains form an alternating ring which encloses part of the gamma chain. F(1) is attached to F(0) by a central stalk formed by the gamma and epsilon chains, while a peripheral stalk is formed by the delta and b chains.</text>
</comment>
<comment type="subcellular location">
    <subcellularLocation>
        <location evidence="1">Cell inner membrane</location>
        <topology evidence="1">Peripheral membrane protein</topology>
    </subcellularLocation>
</comment>
<comment type="similarity">
    <text evidence="1">Belongs to the ATPase delta chain family.</text>
</comment>
<evidence type="ECO:0000255" key="1">
    <source>
        <dbReference type="HAMAP-Rule" id="MF_01416"/>
    </source>
</evidence>
<name>ATPD_HALOH</name>
<gene>
    <name evidence="1" type="primary">atpH</name>
    <name type="ordered locus">Hore_17830</name>
</gene>
<feature type="chain" id="PRO_1000184731" description="ATP synthase subunit delta">
    <location>
        <begin position="1"/>
        <end position="191"/>
    </location>
</feature>
<proteinExistence type="inferred from homology"/>
<reference key="1">
    <citation type="journal article" date="2009" name="PLoS ONE">
        <title>Genome analysis of the anaerobic thermohalophilic bacterium Halothermothrix orenii.</title>
        <authorList>
            <person name="Mavromatis K."/>
            <person name="Ivanova N."/>
            <person name="Anderson I."/>
            <person name="Lykidis A."/>
            <person name="Hooper S.D."/>
            <person name="Sun H."/>
            <person name="Kunin V."/>
            <person name="Lapidus A."/>
            <person name="Hugenholtz P."/>
            <person name="Patel B."/>
            <person name="Kyrpides N.C."/>
        </authorList>
    </citation>
    <scope>NUCLEOTIDE SEQUENCE [LARGE SCALE GENOMIC DNA]</scope>
    <source>
        <strain>H 168 / OCM 544 / DSM 9562</strain>
    </source>
</reference>
<sequence>MINNEVSRKYSSALLEVALESDNLSRFKEELEGISKALKQYDDLKKILYHPRVLPDDKKEVIHQVFSDKVSEPVFNFLNLIVDKRREVYLDFIIRDFIKQANRKEGLVKIEVVSAIELSEKQREQLKNKLKKALNKKIELKTKIDPGIIGGIIIKIGDRLIDGSIKHQLDSIKESIEKIPVTELGVIQNES</sequence>
<accession>B8CZ13</accession>
<keyword id="KW-0066">ATP synthesis</keyword>
<keyword id="KW-0997">Cell inner membrane</keyword>
<keyword id="KW-1003">Cell membrane</keyword>
<keyword id="KW-0139">CF(1)</keyword>
<keyword id="KW-0375">Hydrogen ion transport</keyword>
<keyword id="KW-0406">Ion transport</keyword>
<keyword id="KW-0472">Membrane</keyword>
<keyword id="KW-1185">Reference proteome</keyword>
<keyword id="KW-0813">Transport</keyword>
<dbReference type="EMBL" id="CP001098">
    <property type="protein sequence ID" value="ACL70532.1"/>
    <property type="molecule type" value="Genomic_DNA"/>
</dbReference>
<dbReference type="RefSeq" id="WP_015923502.1">
    <property type="nucleotide sequence ID" value="NC_011899.1"/>
</dbReference>
<dbReference type="SMR" id="B8CZ13"/>
<dbReference type="STRING" id="373903.Hore_17830"/>
<dbReference type="KEGG" id="hor:Hore_17830"/>
<dbReference type="eggNOG" id="COG0712">
    <property type="taxonomic scope" value="Bacteria"/>
</dbReference>
<dbReference type="HOGENOM" id="CLU_085114_1_1_9"/>
<dbReference type="OrthoDB" id="9802471at2"/>
<dbReference type="Proteomes" id="UP000000719">
    <property type="component" value="Chromosome"/>
</dbReference>
<dbReference type="GO" id="GO:0005886">
    <property type="term" value="C:plasma membrane"/>
    <property type="evidence" value="ECO:0007669"/>
    <property type="project" value="UniProtKB-SubCell"/>
</dbReference>
<dbReference type="GO" id="GO:0045259">
    <property type="term" value="C:proton-transporting ATP synthase complex"/>
    <property type="evidence" value="ECO:0007669"/>
    <property type="project" value="UniProtKB-KW"/>
</dbReference>
<dbReference type="GO" id="GO:0046933">
    <property type="term" value="F:proton-transporting ATP synthase activity, rotational mechanism"/>
    <property type="evidence" value="ECO:0007669"/>
    <property type="project" value="UniProtKB-UniRule"/>
</dbReference>
<dbReference type="Gene3D" id="1.10.520.20">
    <property type="entry name" value="N-terminal domain of the delta subunit of the F1F0-ATP synthase"/>
    <property type="match status" value="1"/>
</dbReference>
<dbReference type="HAMAP" id="MF_01416">
    <property type="entry name" value="ATP_synth_delta_bact"/>
    <property type="match status" value="1"/>
</dbReference>
<dbReference type="InterPro" id="IPR026015">
    <property type="entry name" value="ATP_synth_OSCP/delta_N_sf"/>
</dbReference>
<dbReference type="InterPro" id="IPR000711">
    <property type="entry name" value="ATPase_OSCP/dsu"/>
</dbReference>
<dbReference type="NCBIfam" id="TIGR01145">
    <property type="entry name" value="ATP_synt_delta"/>
    <property type="match status" value="1"/>
</dbReference>
<dbReference type="NCBIfam" id="NF004402">
    <property type="entry name" value="PRK05758.2-2"/>
    <property type="match status" value="1"/>
</dbReference>
<dbReference type="NCBIfam" id="NF004403">
    <property type="entry name" value="PRK05758.2-4"/>
    <property type="match status" value="1"/>
</dbReference>
<dbReference type="PANTHER" id="PTHR11910">
    <property type="entry name" value="ATP SYNTHASE DELTA CHAIN"/>
    <property type="match status" value="1"/>
</dbReference>
<dbReference type="Pfam" id="PF00213">
    <property type="entry name" value="OSCP"/>
    <property type="match status" value="1"/>
</dbReference>
<dbReference type="PRINTS" id="PR00125">
    <property type="entry name" value="ATPASEDELTA"/>
</dbReference>
<dbReference type="SUPFAM" id="SSF47928">
    <property type="entry name" value="N-terminal domain of the delta subunit of the F1F0-ATP synthase"/>
    <property type="match status" value="1"/>
</dbReference>
<organism>
    <name type="scientific">Halothermothrix orenii (strain H 168 / OCM 544 / DSM 9562)</name>
    <dbReference type="NCBI Taxonomy" id="373903"/>
    <lineage>
        <taxon>Bacteria</taxon>
        <taxon>Bacillati</taxon>
        <taxon>Bacillota</taxon>
        <taxon>Clostridia</taxon>
        <taxon>Halanaerobiales</taxon>
        <taxon>Halothermotrichaceae</taxon>
        <taxon>Halothermothrix</taxon>
    </lineage>
</organism>